<reference key="1">
    <citation type="journal article" date="1999" name="Genetics">
        <title>Divergence of the hyperthermophilic archaea Pyrococcus furiosus and P. horikoshii inferred from complete genomic sequences.</title>
        <authorList>
            <person name="Maeder D.L."/>
            <person name="Weiss R.B."/>
            <person name="Dunn D.M."/>
            <person name="Cherry J.L."/>
            <person name="Gonzalez J.M."/>
            <person name="DiRuggiero J."/>
            <person name="Robb F.T."/>
        </authorList>
    </citation>
    <scope>NUCLEOTIDE SEQUENCE [LARGE SCALE GENOMIC DNA]</scope>
    <source>
        <strain>ATCC 43587 / DSM 3638 / JCM 8422 / Vc1</strain>
    </source>
</reference>
<comment type="function">
    <text evidence="1">Possibly the antitoxin component of a type II toxin-antitoxin (TA) system.</text>
</comment>
<comment type="similarity">
    <text evidence="1">Belongs to the UPF0330 family.</text>
</comment>
<comment type="sequence caution" evidence="2">
    <conflict type="erroneous initiation">
        <sequence resource="EMBL-CDS" id="AAL81346"/>
    </conflict>
    <text>Extended N-terminus.</text>
</comment>
<accession>Q8U1I5</accession>
<proteinExistence type="inferred from homology"/>
<dbReference type="EMBL" id="AE009950">
    <property type="protein sequence ID" value="AAL81346.1"/>
    <property type="status" value="ALT_INIT"/>
    <property type="molecule type" value="Genomic_DNA"/>
</dbReference>
<dbReference type="RefSeq" id="WP_014835359.1">
    <property type="nucleotide sequence ID" value="NZ_CP023154.1"/>
</dbReference>
<dbReference type="SMR" id="Q8U1I5"/>
<dbReference type="STRING" id="186497.PF1222"/>
<dbReference type="PaxDb" id="186497-PF1222"/>
<dbReference type="KEGG" id="pfu:PF1222"/>
<dbReference type="PATRIC" id="fig|186497.12.peg.1285"/>
<dbReference type="eggNOG" id="arCOG02681">
    <property type="taxonomic scope" value="Archaea"/>
</dbReference>
<dbReference type="HOGENOM" id="CLU_170073_3_0_2"/>
<dbReference type="OrthoDB" id="85981at2157"/>
<dbReference type="PhylomeDB" id="Q8U1I5"/>
<dbReference type="Proteomes" id="UP000001013">
    <property type="component" value="Chromosome"/>
</dbReference>
<dbReference type="HAMAP" id="MF_00794">
    <property type="entry name" value="UPF0330"/>
    <property type="match status" value="1"/>
</dbReference>
<dbReference type="InterPro" id="IPR003847">
    <property type="entry name" value="Put_antitoxin"/>
</dbReference>
<dbReference type="Pfam" id="PF02697">
    <property type="entry name" value="VAPB_antitox"/>
    <property type="match status" value="1"/>
</dbReference>
<name>Y1222_PYRFU</name>
<sequence>MVKTITISDDVYNELLRIKGNKSFSEVLRELLKERKGNKEVLKRIFGILSEEEYQEVKKRLKELEGEFEKWEQSLTQM</sequence>
<keyword id="KW-1185">Reference proteome</keyword>
<keyword id="KW-1277">Toxin-antitoxin system</keyword>
<protein>
    <recommendedName>
        <fullName evidence="1">Putative antitoxin PF1222</fullName>
    </recommendedName>
</protein>
<organism>
    <name type="scientific">Pyrococcus furiosus (strain ATCC 43587 / DSM 3638 / JCM 8422 / Vc1)</name>
    <dbReference type="NCBI Taxonomy" id="186497"/>
    <lineage>
        <taxon>Archaea</taxon>
        <taxon>Methanobacteriati</taxon>
        <taxon>Methanobacteriota</taxon>
        <taxon>Thermococci</taxon>
        <taxon>Thermococcales</taxon>
        <taxon>Thermococcaceae</taxon>
        <taxon>Pyrococcus</taxon>
    </lineage>
</organism>
<evidence type="ECO:0000255" key="1">
    <source>
        <dbReference type="HAMAP-Rule" id="MF_00794"/>
    </source>
</evidence>
<evidence type="ECO:0000305" key="2"/>
<feature type="chain" id="PRO_0000157112" description="Putative antitoxin PF1222">
    <location>
        <begin position="1"/>
        <end position="78"/>
    </location>
</feature>
<gene>
    <name type="ordered locus">PF1222</name>
</gene>